<sequence>MLILPIVKGEYKKDYNLKHLTWFKVGGNAEIFFKPLDSEDLKSFLIQNKQKLPIKTFGAGSNIIIRDGGIEGVVIKLGQNFSNIEFIDNHLIVGSSCLNYNLAKFCQANAISGFEFLVGIPGTIGGGVAMNAGAYGSEFKDIVVQIEAIDFAGNFLTFTNEEIGFKYRSNNLPKNLIILKVIFKINKGDSENILLRMNEINNARSSTQPIKERTGGSTFANPEGCKSWELIDKAGLRGYRIGGASMSELHCNFMINNGDATAKDLEDLGNFVQQKVCEDSGVKLEWEIKRIGRHP</sequence>
<organism>
    <name type="scientific">Rickettsia rickettsii (strain Iowa)</name>
    <dbReference type="NCBI Taxonomy" id="452659"/>
    <lineage>
        <taxon>Bacteria</taxon>
        <taxon>Pseudomonadati</taxon>
        <taxon>Pseudomonadota</taxon>
        <taxon>Alphaproteobacteria</taxon>
        <taxon>Rickettsiales</taxon>
        <taxon>Rickettsiaceae</taxon>
        <taxon>Rickettsieae</taxon>
        <taxon>Rickettsia</taxon>
        <taxon>spotted fever group</taxon>
    </lineage>
</organism>
<protein>
    <recommendedName>
        <fullName evidence="1">UDP-N-acetylenolpyruvoylglucosamine reductase</fullName>
        <ecNumber evidence="1">1.3.1.98</ecNumber>
    </recommendedName>
    <alternativeName>
        <fullName evidence="1">UDP-N-acetylmuramate dehydrogenase</fullName>
    </alternativeName>
</protein>
<reference key="1">
    <citation type="journal article" date="2008" name="Infect. Immun.">
        <title>Genomic comparison of virulent Rickettsia rickettsii Sheila Smith and avirulent Rickettsia rickettsii Iowa.</title>
        <authorList>
            <person name="Ellison D.W."/>
            <person name="Clark T.R."/>
            <person name="Sturdevant D.E."/>
            <person name="Virtaneva K."/>
            <person name="Porcella S.F."/>
            <person name="Hackstadt T."/>
        </authorList>
    </citation>
    <scope>NUCLEOTIDE SEQUENCE [LARGE SCALE GENOMIC DNA]</scope>
    <source>
        <strain>Iowa</strain>
    </source>
</reference>
<comment type="function">
    <text evidence="1">Cell wall formation.</text>
</comment>
<comment type="catalytic activity">
    <reaction evidence="1">
        <text>UDP-N-acetyl-alpha-D-muramate + NADP(+) = UDP-N-acetyl-3-O-(1-carboxyvinyl)-alpha-D-glucosamine + NADPH + H(+)</text>
        <dbReference type="Rhea" id="RHEA:12248"/>
        <dbReference type="ChEBI" id="CHEBI:15378"/>
        <dbReference type="ChEBI" id="CHEBI:57783"/>
        <dbReference type="ChEBI" id="CHEBI:58349"/>
        <dbReference type="ChEBI" id="CHEBI:68483"/>
        <dbReference type="ChEBI" id="CHEBI:70757"/>
        <dbReference type="EC" id="1.3.1.98"/>
    </reaction>
</comment>
<comment type="cofactor">
    <cofactor evidence="1">
        <name>FAD</name>
        <dbReference type="ChEBI" id="CHEBI:57692"/>
    </cofactor>
</comment>
<comment type="pathway">
    <text evidence="1">Cell wall biogenesis; peptidoglycan biosynthesis.</text>
</comment>
<comment type="subcellular location">
    <subcellularLocation>
        <location evidence="1">Cytoplasm</location>
    </subcellularLocation>
</comment>
<comment type="similarity">
    <text evidence="1">Belongs to the MurB family.</text>
</comment>
<evidence type="ECO:0000255" key="1">
    <source>
        <dbReference type="HAMAP-Rule" id="MF_00037"/>
    </source>
</evidence>
<proteinExistence type="inferred from homology"/>
<dbReference type="EC" id="1.3.1.98" evidence="1"/>
<dbReference type="EMBL" id="CP000766">
    <property type="protein sequence ID" value="ABY72297.1"/>
    <property type="molecule type" value="Genomic_DNA"/>
</dbReference>
<dbReference type="RefSeq" id="WP_012150547.1">
    <property type="nucleotide sequence ID" value="NC_010263.3"/>
</dbReference>
<dbReference type="SMR" id="B0BWS1"/>
<dbReference type="GeneID" id="79937109"/>
<dbReference type="KEGG" id="rrj:RrIowa_0402"/>
<dbReference type="eggNOG" id="COG0812">
    <property type="taxonomic scope" value="Bacteria"/>
</dbReference>
<dbReference type="HOGENOM" id="CLU_035304_1_0_5"/>
<dbReference type="UniPathway" id="UPA00219"/>
<dbReference type="Proteomes" id="UP000000796">
    <property type="component" value="Chromosome"/>
</dbReference>
<dbReference type="GO" id="GO:0005829">
    <property type="term" value="C:cytosol"/>
    <property type="evidence" value="ECO:0007669"/>
    <property type="project" value="TreeGrafter"/>
</dbReference>
<dbReference type="GO" id="GO:0071949">
    <property type="term" value="F:FAD binding"/>
    <property type="evidence" value="ECO:0007669"/>
    <property type="project" value="InterPro"/>
</dbReference>
<dbReference type="GO" id="GO:0008762">
    <property type="term" value="F:UDP-N-acetylmuramate dehydrogenase activity"/>
    <property type="evidence" value="ECO:0007669"/>
    <property type="project" value="UniProtKB-UniRule"/>
</dbReference>
<dbReference type="GO" id="GO:0051301">
    <property type="term" value="P:cell division"/>
    <property type="evidence" value="ECO:0007669"/>
    <property type="project" value="UniProtKB-KW"/>
</dbReference>
<dbReference type="GO" id="GO:0071555">
    <property type="term" value="P:cell wall organization"/>
    <property type="evidence" value="ECO:0007669"/>
    <property type="project" value="UniProtKB-KW"/>
</dbReference>
<dbReference type="GO" id="GO:0009252">
    <property type="term" value="P:peptidoglycan biosynthetic process"/>
    <property type="evidence" value="ECO:0007669"/>
    <property type="project" value="UniProtKB-UniRule"/>
</dbReference>
<dbReference type="GO" id="GO:0008360">
    <property type="term" value="P:regulation of cell shape"/>
    <property type="evidence" value="ECO:0007669"/>
    <property type="project" value="UniProtKB-KW"/>
</dbReference>
<dbReference type="Gene3D" id="3.30.465.10">
    <property type="match status" value="1"/>
</dbReference>
<dbReference type="Gene3D" id="3.90.78.10">
    <property type="entry name" value="UDP-N-acetylenolpyruvoylglucosamine reductase, C-terminal domain"/>
    <property type="match status" value="1"/>
</dbReference>
<dbReference type="Gene3D" id="3.30.43.10">
    <property type="entry name" value="Uridine Diphospho-n-acetylenolpyruvylglucosamine Reductase, domain 2"/>
    <property type="match status" value="1"/>
</dbReference>
<dbReference type="HAMAP" id="MF_00037">
    <property type="entry name" value="MurB"/>
    <property type="match status" value="1"/>
</dbReference>
<dbReference type="InterPro" id="IPR016166">
    <property type="entry name" value="FAD-bd_PCMH"/>
</dbReference>
<dbReference type="InterPro" id="IPR036318">
    <property type="entry name" value="FAD-bd_PCMH-like_sf"/>
</dbReference>
<dbReference type="InterPro" id="IPR016167">
    <property type="entry name" value="FAD-bd_PCMH_sub1"/>
</dbReference>
<dbReference type="InterPro" id="IPR016169">
    <property type="entry name" value="FAD-bd_PCMH_sub2"/>
</dbReference>
<dbReference type="InterPro" id="IPR003170">
    <property type="entry name" value="MurB"/>
</dbReference>
<dbReference type="InterPro" id="IPR011601">
    <property type="entry name" value="MurB_C"/>
</dbReference>
<dbReference type="InterPro" id="IPR036635">
    <property type="entry name" value="MurB_C_sf"/>
</dbReference>
<dbReference type="InterPro" id="IPR006094">
    <property type="entry name" value="Oxid_FAD_bind_N"/>
</dbReference>
<dbReference type="NCBIfam" id="TIGR00179">
    <property type="entry name" value="murB"/>
    <property type="match status" value="1"/>
</dbReference>
<dbReference type="NCBIfam" id="NF010480">
    <property type="entry name" value="PRK13905.1"/>
    <property type="match status" value="1"/>
</dbReference>
<dbReference type="PANTHER" id="PTHR21071">
    <property type="entry name" value="UDP-N-ACETYLENOLPYRUVOYLGLUCOSAMINE REDUCTASE"/>
    <property type="match status" value="1"/>
</dbReference>
<dbReference type="PANTHER" id="PTHR21071:SF4">
    <property type="entry name" value="UDP-N-ACETYLENOLPYRUVOYLGLUCOSAMINE REDUCTASE"/>
    <property type="match status" value="1"/>
</dbReference>
<dbReference type="Pfam" id="PF01565">
    <property type="entry name" value="FAD_binding_4"/>
    <property type="match status" value="1"/>
</dbReference>
<dbReference type="Pfam" id="PF02873">
    <property type="entry name" value="MurB_C"/>
    <property type="match status" value="1"/>
</dbReference>
<dbReference type="SUPFAM" id="SSF56176">
    <property type="entry name" value="FAD-binding/transporter-associated domain-like"/>
    <property type="match status" value="1"/>
</dbReference>
<dbReference type="SUPFAM" id="SSF56194">
    <property type="entry name" value="Uridine diphospho-N-Acetylenolpyruvylglucosamine reductase, MurB, C-terminal domain"/>
    <property type="match status" value="1"/>
</dbReference>
<dbReference type="PROSITE" id="PS51387">
    <property type="entry name" value="FAD_PCMH"/>
    <property type="match status" value="1"/>
</dbReference>
<keyword id="KW-0131">Cell cycle</keyword>
<keyword id="KW-0132">Cell division</keyword>
<keyword id="KW-0133">Cell shape</keyword>
<keyword id="KW-0961">Cell wall biogenesis/degradation</keyword>
<keyword id="KW-0963">Cytoplasm</keyword>
<keyword id="KW-0274">FAD</keyword>
<keyword id="KW-0285">Flavoprotein</keyword>
<keyword id="KW-0521">NADP</keyword>
<keyword id="KW-0560">Oxidoreductase</keyword>
<keyword id="KW-0573">Peptidoglycan synthesis</keyword>
<feature type="chain" id="PRO_1000074525" description="UDP-N-acetylenolpyruvoylglucosamine reductase">
    <location>
        <begin position="1"/>
        <end position="295"/>
    </location>
</feature>
<feature type="domain" description="FAD-binding PCMH-type" evidence="1">
    <location>
        <begin position="24"/>
        <end position="188"/>
    </location>
</feature>
<feature type="active site" evidence="1">
    <location>
        <position position="168"/>
    </location>
</feature>
<feature type="active site" description="Proton donor" evidence="1">
    <location>
        <position position="217"/>
    </location>
</feature>
<feature type="active site" evidence="1">
    <location>
        <position position="287"/>
    </location>
</feature>
<gene>
    <name evidence="1" type="primary">murB</name>
    <name type="ordered locus">RrIowa_0402</name>
</gene>
<accession>B0BWS1</accession>
<name>MURB_RICRO</name>